<dbReference type="EC" id="2.4.1.21" evidence="1"/>
<dbReference type="EMBL" id="AM233362">
    <property type="protein sequence ID" value="CAJ78926.1"/>
    <property type="molecule type" value="Genomic_DNA"/>
</dbReference>
<dbReference type="RefSeq" id="WP_010030994.1">
    <property type="nucleotide sequence ID" value="NZ_CP009694.1"/>
</dbReference>
<dbReference type="SMR" id="Q2A4U4"/>
<dbReference type="CAZy" id="GT5">
    <property type="family name" value="Glycosyltransferase Family 5"/>
</dbReference>
<dbReference type="KEGG" id="ftl:FTL_0486"/>
<dbReference type="UniPathway" id="UPA00164"/>
<dbReference type="Proteomes" id="UP000001944">
    <property type="component" value="Chromosome"/>
</dbReference>
<dbReference type="GO" id="GO:0005829">
    <property type="term" value="C:cytosol"/>
    <property type="evidence" value="ECO:0007669"/>
    <property type="project" value="TreeGrafter"/>
</dbReference>
<dbReference type="GO" id="GO:0009011">
    <property type="term" value="F:alpha-1,4-glucan glucosyltransferase (ADP-glucose donor) activity"/>
    <property type="evidence" value="ECO:0007669"/>
    <property type="project" value="UniProtKB-UniRule"/>
</dbReference>
<dbReference type="GO" id="GO:0004373">
    <property type="term" value="F:alpha-1,4-glucan glucosyltransferase (UDP-glucose donor) activity"/>
    <property type="evidence" value="ECO:0007669"/>
    <property type="project" value="InterPro"/>
</dbReference>
<dbReference type="GO" id="GO:0005978">
    <property type="term" value="P:glycogen biosynthetic process"/>
    <property type="evidence" value="ECO:0007669"/>
    <property type="project" value="UniProtKB-UniRule"/>
</dbReference>
<dbReference type="CDD" id="cd03791">
    <property type="entry name" value="GT5_Glycogen_synthase_DULL1-like"/>
    <property type="match status" value="1"/>
</dbReference>
<dbReference type="Gene3D" id="3.40.50.2000">
    <property type="entry name" value="Glycogen Phosphorylase B"/>
    <property type="match status" value="2"/>
</dbReference>
<dbReference type="HAMAP" id="MF_00484">
    <property type="entry name" value="Glycogen_synth"/>
    <property type="match status" value="1"/>
</dbReference>
<dbReference type="InterPro" id="IPR001296">
    <property type="entry name" value="Glyco_trans_1"/>
</dbReference>
<dbReference type="InterPro" id="IPR011835">
    <property type="entry name" value="GS/SS"/>
</dbReference>
<dbReference type="InterPro" id="IPR013534">
    <property type="entry name" value="Starch_synth_cat_dom"/>
</dbReference>
<dbReference type="NCBIfam" id="TIGR02095">
    <property type="entry name" value="glgA"/>
    <property type="match status" value="1"/>
</dbReference>
<dbReference type="NCBIfam" id="NF001899">
    <property type="entry name" value="PRK00654.1-2"/>
    <property type="match status" value="1"/>
</dbReference>
<dbReference type="PANTHER" id="PTHR45825:SF11">
    <property type="entry name" value="ALPHA AMYLASE DOMAIN-CONTAINING PROTEIN"/>
    <property type="match status" value="1"/>
</dbReference>
<dbReference type="PANTHER" id="PTHR45825">
    <property type="entry name" value="GRANULE-BOUND STARCH SYNTHASE 1, CHLOROPLASTIC/AMYLOPLASTIC"/>
    <property type="match status" value="1"/>
</dbReference>
<dbReference type="Pfam" id="PF08323">
    <property type="entry name" value="Glyco_transf_5"/>
    <property type="match status" value="1"/>
</dbReference>
<dbReference type="Pfam" id="PF00534">
    <property type="entry name" value="Glycos_transf_1"/>
    <property type="match status" value="1"/>
</dbReference>
<dbReference type="SUPFAM" id="SSF53756">
    <property type="entry name" value="UDP-Glycosyltransferase/glycogen phosphorylase"/>
    <property type="match status" value="1"/>
</dbReference>
<organism>
    <name type="scientific">Francisella tularensis subsp. holarctica (strain LVS)</name>
    <dbReference type="NCBI Taxonomy" id="376619"/>
    <lineage>
        <taxon>Bacteria</taxon>
        <taxon>Pseudomonadati</taxon>
        <taxon>Pseudomonadota</taxon>
        <taxon>Gammaproteobacteria</taxon>
        <taxon>Thiotrichales</taxon>
        <taxon>Francisellaceae</taxon>
        <taxon>Francisella</taxon>
    </lineage>
</organism>
<sequence>MRVLHVCSELYPILKTGGLADVTAALPPALAGFGVDSRVLVPGFPAFINAIKDKQLLINIPSRFGAEEINIFLAKIPNTKIDIYVIDAPSLFARPGNPYADSSNQAYADNYLRFALLGWVAARISEGLDAKWKPEIVHSHDWHAGLVPAYIKASELASGKKAVKTVFTVHNLAYQGLFPMSVFTELDLPGIFLSMNGLEFYGQVSFMKAGLYFADKITTVSPTYAKEIQIYEQGCGLEGLLADRHNDLYGVLNGVDPQIWNPKKDSLIATNYSSTTVATGKAKCKLALQQMMGLAEKEDALLFGIVTRLTEQKGLNLLIEAIGEITSRGGQIVLLGSGDKALEEVFLAAAKKYSKSIAVQIGYDEEQAHRIIAGSDVIMVPSRFEPCGLTQLYGLTYGTLPLVHKVGGLADTIIDSSLENLADGTATGFVFDEFSVESLTLAIRRAFALYNRKTDWKKVRKTAMQQQVTWDSSAEKIYQIYKNLVIENN</sequence>
<reference key="1">
    <citation type="submission" date="2006-03" db="EMBL/GenBank/DDBJ databases">
        <title>Complete genome sequence of Francisella tularensis LVS (Live Vaccine Strain).</title>
        <authorList>
            <person name="Chain P."/>
            <person name="Larimer F."/>
            <person name="Land M."/>
            <person name="Stilwagen S."/>
            <person name="Larsson P."/>
            <person name="Bearden S."/>
            <person name="Chu M."/>
            <person name="Oyston P."/>
            <person name="Forsman M."/>
            <person name="Andersson S."/>
            <person name="Lindler L."/>
            <person name="Titball R."/>
            <person name="Garcia E."/>
        </authorList>
    </citation>
    <scope>NUCLEOTIDE SEQUENCE [LARGE SCALE GENOMIC DNA]</scope>
    <source>
        <strain>LVS</strain>
    </source>
</reference>
<protein>
    <recommendedName>
        <fullName evidence="1">Glycogen synthase</fullName>
        <ecNumber evidence="1">2.4.1.21</ecNumber>
    </recommendedName>
    <alternativeName>
        <fullName evidence="1">Starch [bacterial glycogen] synthase</fullName>
    </alternativeName>
</protein>
<gene>
    <name evidence="1" type="primary">glgA</name>
    <name type="ordered locus">FTL_0486</name>
</gene>
<accession>Q2A4U4</accession>
<feature type="chain" id="PRO_0000241792" description="Glycogen synthase">
    <location>
        <begin position="1"/>
        <end position="489"/>
    </location>
</feature>
<feature type="binding site" evidence="1">
    <location>
        <position position="15"/>
    </location>
    <ligand>
        <name>ADP-alpha-D-glucose</name>
        <dbReference type="ChEBI" id="CHEBI:57498"/>
    </ligand>
</feature>
<keyword id="KW-0320">Glycogen biosynthesis</keyword>
<keyword id="KW-0328">Glycosyltransferase</keyword>
<keyword id="KW-1185">Reference proteome</keyword>
<keyword id="KW-0808">Transferase</keyword>
<evidence type="ECO:0000255" key="1">
    <source>
        <dbReference type="HAMAP-Rule" id="MF_00484"/>
    </source>
</evidence>
<comment type="function">
    <text evidence="1">Synthesizes alpha-1,4-glucan chains using ADP-glucose.</text>
</comment>
<comment type="catalytic activity">
    <reaction evidence="1">
        <text>[(1-&gt;4)-alpha-D-glucosyl](n) + ADP-alpha-D-glucose = [(1-&gt;4)-alpha-D-glucosyl](n+1) + ADP + H(+)</text>
        <dbReference type="Rhea" id="RHEA:18189"/>
        <dbReference type="Rhea" id="RHEA-COMP:9584"/>
        <dbReference type="Rhea" id="RHEA-COMP:9587"/>
        <dbReference type="ChEBI" id="CHEBI:15378"/>
        <dbReference type="ChEBI" id="CHEBI:15444"/>
        <dbReference type="ChEBI" id="CHEBI:57498"/>
        <dbReference type="ChEBI" id="CHEBI:456216"/>
        <dbReference type="EC" id="2.4.1.21"/>
    </reaction>
</comment>
<comment type="pathway">
    <text evidence="1">Glycan biosynthesis; glycogen biosynthesis.</text>
</comment>
<comment type="similarity">
    <text evidence="1">Belongs to the glycosyltransferase 1 family. Bacterial/plant glycogen synthase subfamily.</text>
</comment>
<proteinExistence type="inferred from homology"/>
<name>GLGA_FRATH</name>